<proteinExistence type="evidence at protein level"/>
<reference key="1">
    <citation type="journal article" date="1988" name="Mol. Gen. Genet.">
        <title>A multigene family in Calothrix sp. PCC 7601 encodes phycocyanin, the major component of the cyanobacterial light harvesting antenna.</title>
        <authorList>
            <person name="Mazel D."/>
            <person name="Houmard J."/>
            <person name="Tandeau de Marsac N."/>
        </authorList>
    </citation>
    <scope>NUCLEOTIDE SEQUENCE [GENOMIC DNA]</scope>
    <scope>INDUCTION</scope>
    <source>
        <strain>UTEX 481 / PCC 7601 / SAG 1410-2</strain>
    </source>
</reference>
<reference key="2">
    <citation type="journal article" date="1988" name="J. Mol. Biol.">
        <title>Molecular characterization and evolution of sequences encoding light-harvesting components in the chromatically adapting cyanobacterium Fremyella diplosiphon.</title>
        <authorList>
            <person name="Conley P.B."/>
            <person name="Lemaux P.G."/>
            <person name="Grossman A."/>
        </authorList>
    </citation>
    <scope>NUCLEOTIDE SEQUENCE [GENOMIC DNA]</scope>
</reference>
<reference key="3">
    <citation type="journal article" date="1986" name="Proc. Natl. Acad. Sci. U.S.A.">
        <title>Genes encoding major light-harvesting polypeptides are clustered on the genome of the cyanobacterium Fremyella diplosiphon.</title>
        <authorList>
            <person name="Conley P.B."/>
            <person name="Lemaux P.G."/>
            <person name="Lomax T.L."/>
            <person name="Grossman A.R."/>
        </authorList>
    </citation>
    <scope>NUCLEOTIDE SEQUENCE [GENOMIC DNA] OF 1-14</scope>
</reference>
<reference key="4">
    <citation type="journal article" date="1991" name="Plant Cell">
        <title>Hormogonium Differentiation in the Cyanobacterium Calothrix: A Photoregulated Developmental Process.</title>
        <authorList>
            <person name="Damerval T."/>
            <person name="Guglielmi G."/>
            <person name="Houmard J."/>
            <person name="De Marsac N.T."/>
        </authorList>
    </citation>
    <scope>INDUCTION</scope>
    <source>
        <strain>UTEX 481 / PCC 7601 / SAG 1410-2</strain>
    </source>
</reference>
<reference evidence="6" key="5">
    <citation type="journal article" date="1991" name="J. Mol. Biol.">
        <title>Isolation, crystallization, crystal structure analysis and refinement of constitutive C-phycocyanin from the chromatically adapting cyanobacterium Fremyella diplosiphon at 1.66-A resolution.</title>
        <authorList>
            <person name="Duerring M."/>
            <person name="Schmidt G.B."/>
            <person name="Huber R."/>
        </authorList>
    </citation>
    <scope>X-RAY CRYSTALLOGRAPHY (1.66 ANGSTROMS) IN COMPLEX WITH PHYCOCYANOBILIN CHROMOPHORE</scope>
    <scope>SUBUNIT</scope>
</reference>
<evidence type="ECO:0000269" key="1">
    <source>
    </source>
</evidence>
<evidence type="ECO:0000269" key="2">
    <source>
    </source>
</evidence>
<evidence type="ECO:0000269" key="3">
    <source ref="1"/>
</evidence>
<evidence type="ECO:0000303" key="4">
    <source ref="1"/>
</evidence>
<evidence type="ECO:0000305" key="5"/>
<evidence type="ECO:0007744" key="6">
    <source>
        <dbReference type="PDB" id="1CPC"/>
    </source>
</evidence>
<evidence type="ECO:0007829" key="7">
    <source>
        <dbReference type="PDB" id="1CPC"/>
    </source>
</evidence>
<sequence>MKTPLTEAVAAADSQGRFLSSTEIQTAFGRFRQASASLAAAKALTEKASSLASGAANAVYSKFPYTTSQNGPNFASTQTGKDKCVRDIGYYLRMVTYCLVVGGTGPLDDYLIGGIAEINRTFDLSPSWYVEALKYIKANHGLSGDPAVEANSYIDYAINALS</sequence>
<dbReference type="EMBL" id="X06084">
    <property type="protein sequence ID" value="CAA29465.1"/>
    <property type="molecule type" value="Genomic_DNA"/>
</dbReference>
<dbReference type="EMBL" id="X07013">
    <property type="protein sequence ID" value="CAA30065.1"/>
    <property type="molecule type" value="Genomic_DNA"/>
</dbReference>
<dbReference type="EMBL" id="M13218">
    <property type="protein sequence ID" value="AAA24879.1"/>
    <property type="molecule type" value="Genomic_DNA"/>
</dbReference>
<dbReference type="PIR" id="S00714">
    <property type="entry name" value="S00714"/>
</dbReference>
<dbReference type="PDB" id="1CPC">
    <property type="method" value="X-ray"/>
    <property type="resolution" value="1.66 A"/>
    <property type="chains" value="A/K=1-162"/>
</dbReference>
<dbReference type="PDBsum" id="1CPC"/>
<dbReference type="SMR" id="P07122"/>
<dbReference type="EvolutionaryTrace" id="P07122"/>
<dbReference type="GO" id="GO:0030089">
    <property type="term" value="C:phycobilisome"/>
    <property type="evidence" value="ECO:0007669"/>
    <property type="project" value="UniProtKB-KW"/>
</dbReference>
<dbReference type="GO" id="GO:0031676">
    <property type="term" value="C:plasma membrane-derived thylakoid membrane"/>
    <property type="evidence" value="ECO:0007669"/>
    <property type="project" value="UniProtKB-SubCell"/>
</dbReference>
<dbReference type="GO" id="GO:0015979">
    <property type="term" value="P:photosynthesis"/>
    <property type="evidence" value="ECO:0007669"/>
    <property type="project" value="UniProtKB-KW"/>
</dbReference>
<dbReference type="CDD" id="cd14770">
    <property type="entry name" value="PC-PEC_alpha"/>
    <property type="match status" value="1"/>
</dbReference>
<dbReference type="Gene3D" id="1.10.490.20">
    <property type="entry name" value="Phycocyanins"/>
    <property type="match status" value="1"/>
</dbReference>
<dbReference type="InterPro" id="IPR009050">
    <property type="entry name" value="Globin-like_sf"/>
</dbReference>
<dbReference type="InterPro" id="IPR012128">
    <property type="entry name" value="Phycobilisome_asu/bsu"/>
</dbReference>
<dbReference type="InterPro" id="IPR038719">
    <property type="entry name" value="Phycobilisome_asu/bsu_sf"/>
</dbReference>
<dbReference type="InterPro" id="IPR006246">
    <property type="entry name" value="Phycocyanin_a"/>
</dbReference>
<dbReference type="NCBIfam" id="TIGR01338">
    <property type="entry name" value="phycocy_alpha"/>
    <property type="match status" value="1"/>
</dbReference>
<dbReference type="PANTHER" id="PTHR34011:SF4">
    <property type="entry name" value="C-PHYCOCYANIN ALPHA SUBUNIT"/>
    <property type="match status" value="1"/>
</dbReference>
<dbReference type="PANTHER" id="PTHR34011">
    <property type="entry name" value="PHYCOBILISOME 32.1 KDA LINKER POLYPEPTIDE, PHYCOCYANIN-ASSOCIATED, ROD 2-RELATED"/>
    <property type="match status" value="1"/>
</dbReference>
<dbReference type="Pfam" id="PF00502">
    <property type="entry name" value="Phycobilisome"/>
    <property type="match status" value="1"/>
</dbReference>
<dbReference type="PIRSF" id="PIRSF000081">
    <property type="entry name" value="Phycocyanin"/>
    <property type="match status" value="1"/>
</dbReference>
<dbReference type="SUPFAM" id="SSF46458">
    <property type="entry name" value="Globin-like"/>
    <property type="match status" value="1"/>
</dbReference>
<feature type="chain" id="PRO_0000199113" description="C-phycocyanin-1 alpha subunit">
    <location>
        <begin position="1"/>
        <end position="162"/>
    </location>
</feature>
<feature type="binding site" description="covalent" evidence="2 6">
    <location>
        <position position="84"/>
    </location>
    <ligand>
        <name>(2R,3E)-phycocyanobilin</name>
        <dbReference type="ChEBI" id="CHEBI:85275"/>
    </ligand>
</feature>
<feature type="sequence conflict" description="In Ref. 2; CAA30065." evidence="5" ref="2">
    <original>D</original>
    <variation>H</variation>
    <location>
        <position position="13"/>
    </location>
</feature>
<feature type="sequence conflict" description="In Ref. 2; CAA30065." evidence="5" ref="2">
    <original>R</original>
    <variation>A</variation>
    <location>
        <position position="17"/>
    </location>
</feature>
<feature type="sequence conflict" description="In Ref. 2; CAA30065." evidence="5" ref="2">
    <location>
        <position position="67"/>
    </location>
</feature>
<feature type="sequence conflict" description="In Ref. 2; CAA30065." evidence="5" ref="2">
    <location>
        <position position="101"/>
    </location>
</feature>
<feature type="helix" evidence="7">
    <location>
        <begin position="4"/>
        <end position="14"/>
    </location>
</feature>
<feature type="helix" evidence="7">
    <location>
        <begin position="21"/>
        <end position="46"/>
    </location>
</feature>
<feature type="helix" evidence="7">
    <location>
        <begin position="48"/>
        <end position="62"/>
    </location>
</feature>
<feature type="helix" evidence="7">
    <location>
        <begin position="65"/>
        <end position="68"/>
    </location>
</feature>
<feature type="strand" evidence="7">
    <location>
        <begin position="74"/>
        <end position="77"/>
    </location>
</feature>
<feature type="helix" evidence="7">
    <location>
        <begin position="78"/>
        <end position="101"/>
    </location>
</feature>
<feature type="helix" evidence="7">
    <location>
        <begin position="105"/>
        <end position="110"/>
    </location>
</feature>
<feature type="turn" evidence="7">
    <location>
        <begin position="111"/>
        <end position="114"/>
    </location>
</feature>
<feature type="helix" evidence="7">
    <location>
        <begin position="115"/>
        <end position="122"/>
    </location>
</feature>
<feature type="helix" evidence="7">
    <location>
        <begin position="126"/>
        <end position="139"/>
    </location>
</feature>
<feature type="helix" evidence="7">
    <location>
        <begin position="144"/>
        <end position="160"/>
    </location>
</feature>
<protein>
    <recommendedName>
        <fullName>C-phycocyanin-1 alpha subunit</fullName>
    </recommendedName>
</protein>
<name>PHCA1_MICDP</name>
<comment type="function">
    <text>Light-harvesting photosynthetic bile pigment-protein from the phycobiliprotein complex (phycobilisome, PBS). Phycocyanin is the major phycobiliprotein in the PBS rod.</text>
</comment>
<comment type="subunit">
    <text evidence="2">Heterodimer of an alpha and a beta subunit, which further assembles into trimers and the trimers into hexamers.</text>
</comment>
<comment type="subcellular location">
    <subcellularLocation>
        <location>Cellular thylakoid membrane</location>
        <topology>Peripheral membrane protein</topology>
        <orientation>Cytoplasmic side</orientation>
    </subcellularLocation>
    <text>Part of the phycobilisome rod.</text>
</comment>
<comment type="induction">
    <text evidence="1 3">Phycocyanin-1 is expressed at similar levels in green and red light (constitutive phycocyanin) (Ref.1). Constitutively transcribed in vegetative cells, not expressed during hormogonia differentiation in red light (PubMed:12324595).</text>
</comment>
<comment type="PTM">
    <text evidence="2 6">Contains one covalently linked bilin chromophore.</text>
</comment>
<comment type="similarity">
    <text evidence="5">Belongs to the phycobiliprotein family.</text>
</comment>
<gene>
    <name evidence="4" type="primary">cpcA1</name>
</gene>
<keyword id="KW-0002">3D-structure</keyword>
<keyword id="KW-0042">Antenna complex</keyword>
<keyword id="KW-0089">Bile pigment</keyword>
<keyword id="KW-0157">Chromophore</keyword>
<keyword id="KW-0249">Electron transport</keyword>
<keyword id="KW-0472">Membrane</keyword>
<keyword id="KW-0602">Photosynthesis</keyword>
<keyword id="KW-0605">Phycobilisome</keyword>
<keyword id="KW-0793">Thylakoid</keyword>
<keyword id="KW-0813">Transport</keyword>
<accession>P07122</accession>
<organism>
    <name type="scientific">Microchaete diplosiphon</name>
    <name type="common">Fremyella diplosiphon</name>
    <dbReference type="NCBI Taxonomy" id="1197"/>
    <lineage>
        <taxon>Bacteria</taxon>
        <taxon>Bacillati</taxon>
        <taxon>Cyanobacteriota</taxon>
        <taxon>Cyanophyceae</taxon>
        <taxon>Nostocales</taxon>
        <taxon>Rivulariaceae</taxon>
        <taxon>Microchaete</taxon>
    </lineage>
</organism>